<feature type="chain" id="PRO_0000081412" description="Ethylene receptor 1">
    <location>
        <begin position="1"/>
        <end position="738"/>
    </location>
</feature>
<feature type="transmembrane region" description="Helical" evidence="2">
    <location>
        <begin position="23"/>
        <end position="43"/>
    </location>
</feature>
<feature type="transmembrane region" description="Helical" evidence="2">
    <location>
        <begin position="53"/>
        <end position="73"/>
    </location>
</feature>
<feature type="transmembrane region" description="Helical" evidence="2">
    <location>
        <begin position="92"/>
        <end position="112"/>
    </location>
</feature>
<feature type="domain" description="GAF">
    <location>
        <begin position="158"/>
        <end position="307"/>
    </location>
</feature>
<feature type="domain" description="Histidine kinase" evidence="3">
    <location>
        <begin position="350"/>
        <end position="585"/>
    </location>
</feature>
<feature type="domain" description="Response regulatory" evidence="4">
    <location>
        <begin position="611"/>
        <end position="729"/>
    </location>
</feature>
<feature type="binding site">
    <location>
        <position position="65"/>
    </location>
    <ligand>
        <name>Cu cation</name>
        <dbReference type="ChEBI" id="CHEBI:23378"/>
    </ligand>
</feature>
<feature type="binding site">
    <location>
        <position position="69"/>
    </location>
    <ligand>
        <name>Cu cation</name>
        <dbReference type="ChEBI" id="CHEBI:23378"/>
    </ligand>
</feature>
<feature type="binding site" evidence="22">
    <location>
        <begin position="470"/>
        <end position="473"/>
    </location>
    <ligand>
        <name>ADP</name>
        <dbReference type="ChEBI" id="CHEBI:456216"/>
    </ligand>
</feature>
<feature type="binding site" evidence="22">
    <location>
        <position position="513"/>
    </location>
    <ligand>
        <name>ADP</name>
        <dbReference type="ChEBI" id="CHEBI:456216"/>
    </ligand>
</feature>
<feature type="binding site" evidence="22">
    <location>
        <position position="529"/>
    </location>
    <ligand>
        <name>ADP</name>
        <dbReference type="ChEBI" id="CHEBI:456216"/>
    </ligand>
</feature>
<feature type="binding site" evidence="22">
    <location>
        <position position="544"/>
    </location>
    <ligand>
        <name>ADP</name>
        <dbReference type="ChEBI" id="CHEBI:456216"/>
    </ligand>
</feature>
<feature type="binding site" evidence="22">
    <location>
        <position position="548"/>
    </location>
    <ligand>
        <name>ADP</name>
        <dbReference type="ChEBI" id="CHEBI:456216"/>
    </ligand>
</feature>
<feature type="modified residue" description="Phosphohistidine; by autocatalysis" evidence="12">
    <location>
        <position position="353"/>
    </location>
</feature>
<feature type="modified residue" description="4-aspartylphosphate" evidence="4">
    <location>
        <position position="659"/>
    </location>
</feature>
<feature type="disulfide bond" description="Interchain" evidence="14">
    <location>
        <position position="4"/>
    </location>
</feature>
<feature type="disulfide bond" description="Interchain" evidence="14">
    <location>
        <position position="6"/>
    </location>
</feature>
<feature type="cross-link" description="Glycyl lysine isopeptide (Lys-Gly) (interchain with G-Cter in ubiquitin)" evidence="1">
    <location>
        <position position="714"/>
    </location>
</feature>
<feature type="mutagenesis site" description="Prevents dimerization but not ethylene binding." evidence="14 15">
    <original>C</original>
    <variation>S</variation>
    <location>
        <position position="4"/>
    </location>
</feature>
<feature type="mutagenesis site" description="Prevents dimerization but not ethylene binding." evidence="14 15">
    <original>C</original>
    <variation>S</variation>
    <location>
        <position position="6"/>
    </location>
</feature>
<feature type="mutagenesis site" description="In etr1-3; ethylene insensitivity.">
    <original>A</original>
    <variation>V</variation>
    <location>
        <position position="31"/>
    </location>
</feature>
<feature type="mutagenesis site" description="No effect on ethylene binding." evidence="17">
    <original>E</original>
    <variation>A</variation>
    <location>
        <position position="38"/>
    </location>
</feature>
<feature type="mutagenesis site" description="In etr1-4; ethylene insensitivity.">
    <original>I</original>
    <variation>F</variation>
    <location>
        <position position="62"/>
    </location>
</feature>
<feature type="mutagenesis site" description="In etr1-1; no copper binding and ethylene insensitivity." evidence="15 17">
    <original>C</original>
    <variation>Y</variation>
    <variation>S</variation>
    <location>
        <position position="65"/>
    </location>
</feature>
<feature type="mutagenesis site" description="No copper binding and ethylene insensitivity." evidence="17">
    <original>H</original>
    <variation>A</variation>
    <location>
        <position position="69"/>
    </location>
</feature>
<feature type="mutagenesis site" description="No effect." evidence="17">
    <original>H</original>
    <variation>A</variation>
    <location>
        <position position="79"/>
    </location>
</feature>
<feature type="mutagenesis site" description="No effect on ethylene binding." evidence="17">
    <original>M</original>
    <variation>A</variation>
    <location>
        <position position="87"/>
    </location>
</feature>
<feature type="mutagenesis site" description="No effect on dimerization or ethylene binding." evidence="14 15">
    <original>C</original>
    <variation>S</variation>
    <location>
        <position position="99"/>
    </location>
</feature>
<feature type="mutagenesis site" description="In etr1-2; ethylene insensitivity.">
    <original>A</original>
    <variation>T</variation>
    <location>
        <position position="102"/>
    </location>
</feature>
<feature type="mutagenesis site" description="No effect on ethylene binding." evidence="17">
    <original>M</original>
    <variation>A</variation>
    <location>
        <position position="104"/>
    </location>
</feature>
<feature type="mutagenesis site" description="No effect on ethylene binding." evidence="17">
    <original>H</original>
    <variation>A</variation>
    <location>
        <position position="107"/>
    </location>
</feature>
<feature type="mutagenesis site" description="Loss of phosphorylation and increased affinity toward EIN2." evidence="12">
    <original>H</original>
    <variation>A</variation>
    <location>
        <position position="353"/>
    </location>
</feature>
<feature type="mutagenesis site" description="Reduced affinity toward EIN2." evidence="12">
    <original>H</original>
    <variation>E</variation>
    <location>
        <position position="353"/>
    </location>
</feature>
<feature type="strand" evidence="24">
    <location>
        <begin position="415"/>
        <end position="418"/>
    </location>
</feature>
<feature type="helix" evidence="24">
    <location>
        <begin position="419"/>
        <end position="437"/>
    </location>
</feature>
<feature type="strand" evidence="24">
    <location>
        <begin position="441"/>
        <end position="445"/>
    </location>
</feature>
<feature type="strand" evidence="24">
    <location>
        <begin position="451"/>
        <end position="455"/>
    </location>
</feature>
<feature type="helix" evidence="24">
    <location>
        <begin position="457"/>
        <end position="474"/>
    </location>
</feature>
<feature type="strand" evidence="24">
    <location>
        <begin position="476"/>
        <end position="478"/>
    </location>
</feature>
<feature type="strand" evidence="24">
    <location>
        <begin position="480"/>
        <end position="487"/>
    </location>
</feature>
<feature type="strand" evidence="24">
    <location>
        <begin position="504"/>
        <end position="512"/>
    </location>
</feature>
<feature type="helix" evidence="24">
    <location>
        <begin position="520"/>
        <end position="525"/>
    </location>
</feature>
<feature type="helix" evidence="24">
    <location>
        <begin position="547"/>
        <end position="557"/>
    </location>
</feature>
<feature type="strand" evidence="24">
    <location>
        <begin position="561"/>
        <end position="565"/>
    </location>
</feature>
<feature type="strand" evidence="24">
    <location>
        <begin position="574"/>
        <end position="583"/>
    </location>
</feature>
<feature type="strand" evidence="23">
    <location>
        <begin position="611"/>
        <end position="615"/>
    </location>
</feature>
<feature type="helix" evidence="23">
    <location>
        <begin position="619"/>
        <end position="631"/>
    </location>
</feature>
<feature type="strand" evidence="23">
    <location>
        <begin position="635"/>
        <end position="641"/>
    </location>
</feature>
<feature type="helix" evidence="23">
    <location>
        <begin position="642"/>
        <end position="648"/>
    </location>
</feature>
<feature type="strand" evidence="23">
    <location>
        <begin position="654"/>
        <end position="659"/>
    </location>
</feature>
<feature type="turn" evidence="23">
    <location>
        <begin position="664"/>
        <end position="668"/>
    </location>
</feature>
<feature type="helix" evidence="23">
    <location>
        <begin position="669"/>
        <end position="678"/>
    </location>
</feature>
<feature type="strand" evidence="23">
    <location>
        <begin position="687"/>
        <end position="693"/>
    </location>
</feature>
<feature type="helix" evidence="23">
    <location>
        <begin position="697"/>
        <end position="705"/>
    </location>
</feature>
<feature type="strand" evidence="23">
    <location>
        <begin position="710"/>
        <end position="715"/>
    </location>
</feature>
<feature type="helix" evidence="23">
    <location>
        <begin position="718"/>
        <end position="729"/>
    </location>
</feature>
<organism>
    <name type="scientific">Arabidopsis thaliana</name>
    <name type="common">Mouse-ear cress</name>
    <dbReference type="NCBI Taxonomy" id="3702"/>
    <lineage>
        <taxon>Eukaryota</taxon>
        <taxon>Viridiplantae</taxon>
        <taxon>Streptophyta</taxon>
        <taxon>Embryophyta</taxon>
        <taxon>Tracheophyta</taxon>
        <taxon>Spermatophyta</taxon>
        <taxon>Magnoliopsida</taxon>
        <taxon>eudicotyledons</taxon>
        <taxon>Gunneridae</taxon>
        <taxon>Pentapetalae</taxon>
        <taxon>rosids</taxon>
        <taxon>malvids</taxon>
        <taxon>Brassicales</taxon>
        <taxon>Brassicaceae</taxon>
        <taxon>Camelineae</taxon>
        <taxon>Arabidopsis</taxon>
    </lineage>
</organism>
<dbReference type="EC" id="2.7.13.3" evidence="19"/>
<dbReference type="EMBL" id="L24119">
    <property type="protein sequence ID" value="AAA70047.1"/>
    <property type="molecule type" value="Genomic_DNA"/>
</dbReference>
<dbReference type="EMBL" id="AC020665">
    <property type="protein sequence ID" value="AAG52169.1"/>
    <property type="molecule type" value="Genomic_DNA"/>
</dbReference>
<dbReference type="EMBL" id="CP002684">
    <property type="protein sequence ID" value="AEE34497.1"/>
    <property type="molecule type" value="Genomic_DNA"/>
</dbReference>
<dbReference type="PIR" id="A48246">
    <property type="entry name" value="A48246"/>
</dbReference>
<dbReference type="RefSeq" id="NP_176808.3">
    <property type="nucleotide sequence ID" value="NM_105305.4"/>
</dbReference>
<dbReference type="PDB" id="1DCF">
    <property type="method" value="X-ray"/>
    <property type="resolution" value="2.50 A"/>
    <property type="chains" value="A=605-738"/>
</dbReference>
<dbReference type="PDB" id="4PL9">
    <property type="method" value="X-ray"/>
    <property type="resolution" value="1.90 A"/>
    <property type="chains" value="A=407-589"/>
</dbReference>
<dbReference type="PDBsum" id="1DCF"/>
<dbReference type="PDBsum" id="4PL9"/>
<dbReference type="BMRB" id="P49333"/>
<dbReference type="SASBDB" id="P49333"/>
<dbReference type="SMR" id="P49333"/>
<dbReference type="BioGRID" id="28172">
    <property type="interactions" value="47"/>
</dbReference>
<dbReference type="FunCoup" id="P49333">
    <property type="interactions" value="973"/>
</dbReference>
<dbReference type="IntAct" id="P49333">
    <property type="interactions" value="39"/>
</dbReference>
<dbReference type="STRING" id="3702.P49333"/>
<dbReference type="iPTMnet" id="P49333"/>
<dbReference type="PaxDb" id="3702-AT1G66340.1"/>
<dbReference type="ProteomicsDB" id="222329"/>
<dbReference type="EnsemblPlants" id="AT1G66340.1">
    <property type="protein sequence ID" value="AT1G66340.1"/>
    <property type="gene ID" value="AT1G66340"/>
</dbReference>
<dbReference type="GeneID" id="842951"/>
<dbReference type="Gramene" id="AT1G66340.1">
    <property type="protein sequence ID" value="AT1G66340.1"/>
    <property type="gene ID" value="AT1G66340"/>
</dbReference>
<dbReference type="KEGG" id="ath:AT1G66340"/>
<dbReference type="Araport" id="AT1G66340"/>
<dbReference type="TAIR" id="AT1G66340">
    <property type="gene designation" value="ETR1"/>
</dbReference>
<dbReference type="eggNOG" id="KOG0519">
    <property type="taxonomic scope" value="Eukaryota"/>
</dbReference>
<dbReference type="HOGENOM" id="CLU_000445_114_48_1"/>
<dbReference type="InParanoid" id="P49333"/>
<dbReference type="OMA" id="YENEYRF"/>
<dbReference type="PhylomeDB" id="P49333"/>
<dbReference type="BRENDA" id="2.7.13.3">
    <property type="organism ID" value="399"/>
</dbReference>
<dbReference type="EvolutionaryTrace" id="P49333"/>
<dbReference type="PRO" id="PR:P49333"/>
<dbReference type="Proteomes" id="UP000006548">
    <property type="component" value="Chromosome 1"/>
</dbReference>
<dbReference type="ExpressionAtlas" id="P49333">
    <property type="expression patterns" value="baseline and differential"/>
</dbReference>
<dbReference type="GO" id="GO:0005783">
    <property type="term" value="C:endoplasmic reticulum"/>
    <property type="evidence" value="ECO:0000314"/>
    <property type="project" value="TAIR"/>
</dbReference>
<dbReference type="GO" id="GO:0005789">
    <property type="term" value="C:endoplasmic reticulum membrane"/>
    <property type="evidence" value="ECO:0007669"/>
    <property type="project" value="UniProtKB-SubCell"/>
</dbReference>
<dbReference type="GO" id="GO:0005524">
    <property type="term" value="F:ATP binding"/>
    <property type="evidence" value="ECO:0007669"/>
    <property type="project" value="UniProtKB-KW"/>
</dbReference>
<dbReference type="GO" id="GO:0051740">
    <property type="term" value="F:ethylene binding"/>
    <property type="evidence" value="ECO:0000314"/>
    <property type="project" value="TAIR"/>
</dbReference>
<dbReference type="GO" id="GO:0038199">
    <property type="term" value="F:ethylene receptor activity"/>
    <property type="evidence" value="ECO:0000315"/>
    <property type="project" value="UniProtKB"/>
</dbReference>
<dbReference type="GO" id="GO:0042802">
    <property type="term" value="F:identical protein binding"/>
    <property type="evidence" value="ECO:0000353"/>
    <property type="project" value="IntAct"/>
</dbReference>
<dbReference type="GO" id="GO:0046872">
    <property type="term" value="F:metal ion binding"/>
    <property type="evidence" value="ECO:0007669"/>
    <property type="project" value="UniProtKB-KW"/>
</dbReference>
<dbReference type="GO" id="GO:0000155">
    <property type="term" value="F:phosphorelay sensor kinase activity"/>
    <property type="evidence" value="ECO:0007669"/>
    <property type="project" value="InterPro"/>
</dbReference>
<dbReference type="GO" id="GO:0004673">
    <property type="term" value="F:protein histidine kinase activity"/>
    <property type="evidence" value="ECO:0000315"/>
    <property type="project" value="TAIR"/>
</dbReference>
<dbReference type="GO" id="GO:0051301">
    <property type="term" value="P:cell division"/>
    <property type="evidence" value="ECO:0000315"/>
    <property type="project" value="TAIR"/>
</dbReference>
<dbReference type="GO" id="GO:0009690">
    <property type="term" value="P:cytokinin metabolic process"/>
    <property type="evidence" value="ECO:0000315"/>
    <property type="project" value="TAIR"/>
</dbReference>
<dbReference type="GO" id="GO:0006952">
    <property type="term" value="P:defense response"/>
    <property type="evidence" value="ECO:0000304"/>
    <property type="project" value="TAIR"/>
</dbReference>
<dbReference type="GO" id="GO:0052544">
    <property type="term" value="P:defense response by callose deposition in cell wall"/>
    <property type="evidence" value="ECO:0000315"/>
    <property type="project" value="TAIR"/>
</dbReference>
<dbReference type="GO" id="GO:0042742">
    <property type="term" value="P:defense response to bacterium"/>
    <property type="evidence" value="ECO:0000315"/>
    <property type="project" value="TAIR"/>
</dbReference>
<dbReference type="GO" id="GO:0009727">
    <property type="term" value="P:detection of ethylene stimulus"/>
    <property type="evidence" value="ECO:0000315"/>
    <property type="project" value="TAIR"/>
</dbReference>
<dbReference type="GO" id="GO:0050665">
    <property type="term" value="P:hydrogen peroxide biosynthetic process"/>
    <property type="evidence" value="ECO:0000315"/>
    <property type="project" value="TAIR"/>
</dbReference>
<dbReference type="GO" id="GO:0010105">
    <property type="term" value="P:negative regulation of ethylene-activated signaling pathway"/>
    <property type="evidence" value="ECO:0000304"/>
    <property type="project" value="TAIR"/>
</dbReference>
<dbReference type="GO" id="GO:0010087">
    <property type="term" value="P:phloem or xylem histogenesis"/>
    <property type="evidence" value="ECO:0000315"/>
    <property type="project" value="TAIR"/>
</dbReference>
<dbReference type="GO" id="GO:1900140">
    <property type="term" value="P:regulation of seedling development"/>
    <property type="evidence" value="ECO:0000315"/>
    <property type="project" value="TAIR"/>
</dbReference>
<dbReference type="GO" id="GO:0010119">
    <property type="term" value="P:regulation of stomatal movement"/>
    <property type="evidence" value="ECO:0000315"/>
    <property type="project" value="TAIR"/>
</dbReference>
<dbReference type="GO" id="GO:0009737">
    <property type="term" value="P:response to abscisic acid"/>
    <property type="evidence" value="ECO:0000315"/>
    <property type="project" value="TAIR"/>
</dbReference>
<dbReference type="GO" id="GO:0009733">
    <property type="term" value="P:response to auxin"/>
    <property type="evidence" value="ECO:0000315"/>
    <property type="project" value="TAIR"/>
</dbReference>
<dbReference type="GO" id="GO:0009723">
    <property type="term" value="P:response to ethylene"/>
    <property type="evidence" value="ECO:0000315"/>
    <property type="project" value="TAIR"/>
</dbReference>
<dbReference type="GO" id="GO:0009739">
    <property type="term" value="P:response to gibberellin"/>
    <property type="evidence" value="ECO:0000315"/>
    <property type="project" value="TAIR"/>
</dbReference>
<dbReference type="GO" id="GO:0009408">
    <property type="term" value="P:response to heat"/>
    <property type="evidence" value="ECO:0000315"/>
    <property type="project" value="TAIR"/>
</dbReference>
<dbReference type="GO" id="GO:0009625">
    <property type="term" value="P:response to insect"/>
    <property type="evidence" value="ECO:0000315"/>
    <property type="project" value="TAIR"/>
</dbReference>
<dbReference type="GO" id="GO:0002237">
    <property type="term" value="P:response to molecule of bacterial origin"/>
    <property type="evidence" value="ECO:0000315"/>
    <property type="project" value="TAIR"/>
</dbReference>
<dbReference type="GO" id="GO:0009651">
    <property type="term" value="P:response to salt stress"/>
    <property type="evidence" value="ECO:0000270"/>
    <property type="project" value="TAIR"/>
</dbReference>
<dbReference type="GO" id="GO:0010162">
    <property type="term" value="P:seed dormancy process"/>
    <property type="evidence" value="ECO:0000315"/>
    <property type="project" value="TAIR"/>
</dbReference>
<dbReference type="GO" id="GO:0010182">
    <property type="term" value="P:sugar mediated signaling pathway"/>
    <property type="evidence" value="ECO:0000304"/>
    <property type="project" value="TAIR"/>
</dbReference>
<dbReference type="CDD" id="cd00082">
    <property type="entry name" value="HisKA"/>
    <property type="match status" value="1"/>
</dbReference>
<dbReference type="CDD" id="cd19933">
    <property type="entry name" value="REC_ETR-like"/>
    <property type="match status" value="1"/>
</dbReference>
<dbReference type="FunFam" id="3.40.50.2300:FF:000192">
    <property type="entry name" value="Ethylene receptor"/>
    <property type="match status" value="1"/>
</dbReference>
<dbReference type="FunFam" id="1.10.287.130:FF:000004">
    <property type="entry name" value="Ethylene receptor 1"/>
    <property type="match status" value="1"/>
</dbReference>
<dbReference type="FunFam" id="3.30.565.10:FF:000030">
    <property type="entry name" value="Ethylene receptor 1"/>
    <property type="match status" value="1"/>
</dbReference>
<dbReference type="FunFam" id="3.30.450.40:FF:000026">
    <property type="entry name" value="Ethylene response sensor"/>
    <property type="match status" value="1"/>
</dbReference>
<dbReference type="Gene3D" id="1.10.287.130">
    <property type="match status" value="1"/>
</dbReference>
<dbReference type="Gene3D" id="3.30.450.40">
    <property type="match status" value="1"/>
</dbReference>
<dbReference type="Gene3D" id="3.40.50.2300">
    <property type="match status" value="1"/>
</dbReference>
<dbReference type="Gene3D" id="3.30.565.10">
    <property type="entry name" value="Histidine kinase-like ATPase, C-terminal domain"/>
    <property type="match status" value="1"/>
</dbReference>
<dbReference type="InterPro" id="IPR011006">
    <property type="entry name" value="CheY-like_superfamily"/>
</dbReference>
<dbReference type="InterPro" id="IPR014525">
    <property type="entry name" value="ETR"/>
</dbReference>
<dbReference type="InterPro" id="IPR003018">
    <property type="entry name" value="GAF"/>
</dbReference>
<dbReference type="InterPro" id="IPR029016">
    <property type="entry name" value="GAF-like_dom_sf"/>
</dbReference>
<dbReference type="InterPro" id="IPR036890">
    <property type="entry name" value="HATPase_C_sf"/>
</dbReference>
<dbReference type="InterPro" id="IPR005467">
    <property type="entry name" value="His_kinase_dom"/>
</dbReference>
<dbReference type="InterPro" id="IPR003661">
    <property type="entry name" value="HisK_dim/P_dom"/>
</dbReference>
<dbReference type="InterPro" id="IPR036097">
    <property type="entry name" value="HisK_dim/P_sf"/>
</dbReference>
<dbReference type="InterPro" id="IPR004358">
    <property type="entry name" value="Sig_transdc_His_kin-like_C"/>
</dbReference>
<dbReference type="InterPro" id="IPR001789">
    <property type="entry name" value="Sig_transdc_resp-reg_receiver"/>
</dbReference>
<dbReference type="PANTHER" id="PTHR24423:SF615">
    <property type="entry name" value="ETHYLENE RECEPTOR 1"/>
    <property type="match status" value="1"/>
</dbReference>
<dbReference type="PANTHER" id="PTHR24423">
    <property type="entry name" value="TWO-COMPONENT SENSOR HISTIDINE KINASE"/>
    <property type="match status" value="1"/>
</dbReference>
<dbReference type="Pfam" id="PF25487">
    <property type="entry name" value="ETR1_N"/>
    <property type="match status" value="1"/>
</dbReference>
<dbReference type="Pfam" id="PF01590">
    <property type="entry name" value="GAF"/>
    <property type="match status" value="1"/>
</dbReference>
<dbReference type="Pfam" id="PF02518">
    <property type="entry name" value="HATPase_c"/>
    <property type="match status" value="1"/>
</dbReference>
<dbReference type="Pfam" id="PF00512">
    <property type="entry name" value="HisKA"/>
    <property type="match status" value="1"/>
</dbReference>
<dbReference type="Pfam" id="PF00072">
    <property type="entry name" value="Response_reg"/>
    <property type="match status" value="1"/>
</dbReference>
<dbReference type="PIRSF" id="PIRSF026389">
    <property type="entry name" value="Ethyln_sen_HK"/>
    <property type="match status" value="1"/>
</dbReference>
<dbReference type="PRINTS" id="PR00344">
    <property type="entry name" value="BCTRLSENSOR"/>
</dbReference>
<dbReference type="SMART" id="SM00065">
    <property type="entry name" value="GAF"/>
    <property type="match status" value="1"/>
</dbReference>
<dbReference type="SMART" id="SM00387">
    <property type="entry name" value="HATPase_c"/>
    <property type="match status" value="1"/>
</dbReference>
<dbReference type="SMART" id="SM00388">
    <property type="entry name" value="HisKA"/>
    <property type="match status" value="1"/>
</dbReference>
<dbReference type="SMART" id="SM00448">
    <property type="entry name" value="REC"/>
    <property type="match status" value="1"/>
</dbReference>
<dbReference type="SUPFAM" id="SSF55874">
    <property type="entry name" value="ATPase domain of HSP90 chaperone/DNA topoisomerase II/histidine kinase"/>
    <property type="match status" value="1"/>
</dbReference>
<dbReference type="SUPFAM" id="SSF52172">
    <property type="entry name" value="CheY-like"/>
    <property type="match status" value="1"/>
</dbReference>
<dbReference type="SUPFAM" id="SSF55781">
    <property type="entry name" value="GAF domain-like"/>
    <property type="match status" value="1"/>
</dbReference>
<dbReference type="SUPFAM" id="SSF47384">
    <property type="entry name" value="Homodimeric domain of signal transducing histidine kinase"/>
    <property type="match status" value="1"/>
</dbReference>
<dbReference type="PROSITE" id="PS50109">
    <property type="entry name" value="HIS_KIN"/>
    <property type="match status" value="1"/>
</dbReference>
<dbReference type="PROSITE" id="PS50110">
    <property type="entry name" value="RESPONSE_REGULATORY"/>
    <property type="match status" value="1"/>
</dbReference>
<reference key="1">
    <citation type="journal article" date="1993" name="Science">
        <title>Arabidopsis ethylene-response gene ETR1: similarity of product to two-component regulators.</title>
        <authorList>
            <person name="Chang C."/>
            <person name="Kwok S.F."/>
            <person name="Bleecker A.B."/>
            <person name="Meyerowitz E.M."/>
        </authorList>
    </citation>
    <scope>NUCLEOTIDE SEQUENCE [GENOMIC DNA]</scope>
    <scope>MUTANTS ETR1-1; ETR1-2; ETR1-3 AND ETR1-4</scope>
</reference>
<reference key="2">
    <citation type="journal article" date="2000" name="Nature">
        <title>Sequence and analysis of chromosome 1 of the plant Arabidopsis thaliana.</title>
        <authorList>
            <person name="Theologis A."/>
            <person name="Ecker J.R."/>
            <person name="Palm C.J."/>
            <person name="Federspiel N.A."/>
            <person name="Kaul S."/>
            <person name="White O."/>
            <person name="Alonso J."/>
            <person name="Altafi H."/>
            <person name="Araujo R."/>
            <person name="Bowman C.L."/>
            <person name="Brooks S.Y."/>
            <person name="Buehler E."/>
            <person name="Chan A."/>
            <person name="Chao Q."/>
            <person name="Chen H."/>
            <person name="Cheuk R.F."/>
            <person name="Chin C.W."/>
            <person name="Chung M.K."/>
            <person name="Conn L."/>
            <person name="Conway A.B."/>
            <person name="Conway A.R."/>
            <person name="Creasy T.H."/>
            <person name="Dewar K."/>
            <person name="Dunn P."/>
            <person name="Etgu P."/>
            <person name="Feldblyum T.V."/>
            <person name="Feng J.-D."/>
            <person name="Fong B."/>
            <person name="Fujii C.Y."/>
            <person name="Gill J.E."/>
            <person name="Goldsmith A.D."/>
            <person name="Haas B."/>
            <person name="Hansen N.F."/>
            <person name="Hughes B."/>
            <person name="Huizar L."/>
            <person name="Hunter J.L."/>
            <person name="Jenkins J."/>
            <person name="Johnson-Hopson C."/>
            <person name="Khan S."/>
            <person name="Khaykin E."/>
            <person name="Kim C.J."/>
            <person name="Koo H.L."/>
            <person name="Kremenetskaia I."/>
            <person name="Kurtz D.B."/>
            <person name="Kwan A."/>
            <person name="Lam B."/>
            <person name="Langin-Hooper S."/>
            <person name="Lee A."/>
            <person name="Lee J.M."/>
            <person name="Lenz C.A."/>
            <person name="Li J.H."/>
            <person name="Li Y.-P."/>
            <person name="Lin X."/>
            <person name="Liu S.X."/>
            <person name="Liu Z.A."/>
            <person name="Luros J.S."/>
            <person name="Maiti R."/>
            <person name="Marziali A."/>
            <person name="Militscher J."/>
            <person name="Miranda M."/>
            <person name="Nguyen M."/>
            <person name="Nierman W.C."/>
            <person name="Osborne B.I."/>
            <person name="Pai G."/>
            <person name="Peterson J."/>
            <person name="Pham P.K."/>
            <person name="Rizzo M."/>
            <person name="Rooney T."/>
            <person name="Rowley D."/>
            <person name="Sakano H."/>
            <person name="Salzberg S.L."/>
            <person name="Schwartz J.R."/>
            <person name="Shinn P."/>
            <person name="Southwick A.M."/>
            <person name="Sun H."/>
            <person name="Tallon L.J."/>
            <person name="Tambunga G."/>
            <person name="Toriumi M.J."/>
            <person name="Town C.D."/>
            <person name="Utterback T."/>
            <person name="Van Aken S."/>
            <person name="Vaysberg M."/>
            <person name="Vysotskaia V.S."/>
            <person name="Walker M."/>
            <person name="Wu D."/>
            <person name="Yu G."/>
            <person name="Fraser C.M."/>
            <person name="Venter J.C."/>
            <person name="Davis R.W."/>
        </authorList>
    </citation>
    <scope>NUCLEOTIDE SEQUENCE [LARGE SCALE GENOMIC DNA]</scope>
    <source>
        <strain>cv. Columbia</strain>
    </source>
</reference>
<reference key="3">
    <citation type="journal article" date="2017" name="Plant J.">
        <title>Araport11: a complete reannotation of the Arabidopsis thaliana reference genome.</title>
        <authorList>
            <person name="Cheng C.Y."/>
            <person name="Krishnakumar V."/>
            <person name="Chan A.P."/>
            <person name="Thibaud-Nissen F."/>
            <person name="Schobel S."/>
            <person name="Town C.D."/>
        </authorList>
    </citation>
    <scope>GENOME REANNOTATION</scope>
    <source>
        <strain>cv. Columbia</strain>
    </source>
</reference>
<reference key="4">
    <citation type="journal article" date="1995" name="J. Biol. Chem.">
        <title>The ethylene response mediator ETR1 from Arabidopsis forms a disulfide-linked dimer.</title>
        <authorList>
            <person name="Schaller G.E."/>
            <person name="Ladd A.N."/>
            <person name="Lanahan M.B."/>
            <person name="Spanbauer J.M."/>
            <person name="Bleecker A.B."/>
        </authorList>
    </citation>
    <scope>DISULFIDE BONDS</scope>
    <scope>MUTAGENESIS OF CYS-4; CYS-6 AND CYS-99</scope>
</reference>
<reference key="5">
    <citation type="journal article" date="1995" name="Science">
        <title>Ethylene-binding sites generated in yeast expressing the Arabidopsis ETR1 gene.</title>
        <authorList>
            <person name="Schaller G.E."/>
            <person name="Bleecker A.B."/>
        </authorList>
    </citation>
    <scope>MUTAGENESIS OF CYS-4; CYS-6; CYS-65 AND CYS-99</scope>
</reference>
<reference key="6">
    <citation type="journal article" date="1998" name="Plant Cell">
        <title>EIN4 and ERS2 are members of the putative ethylene receptor gene family in Arabidopsis.</title>
        <authorList>
            <person name="Hua J."/>
            <person name="Sakai H."/>
            <person name="Nourizadeh S."/>
            <person name="Chen Q.G."/>
            <person name="Bleecker A.B."/>
            <person name="Ecker J.R."/>
            <person name="Meyerowitz E.M."/>
        </authorList>
    </citation>
    <scope>TISSUE SPECIFICITY</scope>
</reference>
<reference key="7">
    <citation type="journal article" date="1999" name="Science">
        <title>A copper cofactor for the ethylene receptor ETR1 from Arabidopsis.</title>
        <authorList>
            <person name="Rodriguez F.I."/>
            <person name="Esch J.J."/>
            <person name="Hall A.E."/>
            <person name="Binder B.M."/>
            <person name="Schaller G.E."/>
            <person name="Bleecker A.B."/>
        </authorList>
    </citation>
    <scope>COFACTOR</scope>
    <scope>MUTAGENESIS OF GLU-38; CYS-65; HIS-69; HIS-79; MET-87; MET-104 AND HIS-107</scope>
</reference>
<reference key="8">
    <citation type="journal article" date="2000" name="FEBS Lett.">
        <title>Possible His to Asp phosphorelay signaling in an Arabidopsis two-component system.</title>
        <authorList>
            <person name="Urao T."/>
            <person name="Miyata S."/>
            <person name="Yamaguchi-Shinozaki K."/>
            <person name="Shinozaki K."/>
        </authorList>
    </citation>
    <scope>INTERACTION WITH AHP1; AHP2 AND AHP3</scope>
</reference>
<reference key="9">
    <citation type="journal article" date="2002" name="J. Biol. Chem.">
        <title>Localization of the ethylene receptor ETR1 to the endoplasmic reticulum of Arabidopsis.</title>
        <authorList>
            <person name="Chen Y.-F."/>
            <person name="Randlett M.D."/>
            <person name="Findell J.L."/>
            <person name="Schaller G.E."/>
        </authorList>
    </citation>
    <scope>SUBCELLULAR LOCATION</scope>
</reference>
<reference key="10">
    <citation type="journal article" date="2004" name="J. Biol. Chem.">
        <title>Autophosphorylation activity of the Arabidopsis ethylene receptor multigene family.</title>
        <authorList>
            <person name="Moussatche P."/>
            <person name="Klee H.J."/>
        </authorList>
    </citation>
    <scope>PHOSPHORYLATION</scope>
</reference>
<reference key="11">
    <citation type="journal article" date="2004" name="Plant Physiol.">
        <title>Requirement of the histidine kinase domain for signal transduction by the ethylene receptor ETR1.</title>
        <authorList>
            <person name="Qu X."/>
            <person name="Schaller G.E."/>
        </authorList>
    </citation>
    <scope>FUNCTION</scope>
</reference>
<reference key="12">
    <citation type="journal article" date="2005" name="Plant J.">
        <title>Ethylene-binding activity, gene expression levels, and receptor system output for ethylene receptor family members from Arabidopsis and tomato.</title>
        <authorList>
            <person name="O'Malley R.C."/>
            <person name="Rodriguez F.I."/>
            <person name="Esch J.J."/>
            <person name="Binder B.M."/>
            <person name="O'Donnell P."/>
            <person name="Klee H.J."/>
            <person name="Bleecker A.B."/>
        </authorList>
    </citation>
    <scope>FUNCTION</scope>
</reference>
<reference key="13">
    <citation type="journal article" date="2007" name="BMC Plant Biol.">
        <title>A strong constitutive ethylene-response phenotype conferred on Arabidopsis plants containing null mutations in the ethylene receptors ETR1 and ERS1.</title>
        <authorList>
            <person name="Qu X."/>
            <person name="Hall B.P."/>
            <person name="Gao Z."/>
            <person name="Schaller G.E."/>
        </authorList>
    </citation>
    <scope>DISRUPTION PHENOTYPE</scope>
</reference>
<reference key="14">
    <citation type="journal article" date="2008" name="J. Biol. Chem.">
        <title>Heteromeric interactions among ethylene receptors mediate signaling in Arabidopsis.</title>
        <authorList>
            <person name="Gao Z."/>
            <person name="Wen C.-K."/>
            <person name="Binder B.M."/>
            <person name="Chen Y.-F."/>
            <person name="Chang J."/>
            <person name="Chiang Y.-H."/>
            <person name="Kerris R.J. III"/>
            <person name="Chang C."/>
            <person name="Schaller G.E."/>
        </authorList>
    </citation>
    <scope>INTERACTION WITH ERS1; ERS2; ETR2 AND EIN4</scope>
</reference>
<reference key="15">
    <citation type="journal article" date="2009" name="Biochem. J.">
        <title>EIN2, the central regulator of ethylene signalling, is localized at the ER membrane where it interacts with the ethylene receptor ETR1.</title>
        <authorList>
            <person name="Bisson M.M."/>
            <person name="Bleckmann A."/>
            <person name="Allekotte S."/>
            <person name="Groth G."/>
        </authorList>
    </citation>
    <scope>INTERACTION WITH EIN2</scope>
    <scope>SUBCELLULAR LOCATION</scope>
</reference>
<reference key="16">
    <citation type="journal article" date="2010" name="J. Biol. Chem.">
        <title>Molecular association of the Arabidopsis ETR1 ethylene receptor and a regulator of ethylene signaling, RTE1.</title>
        <authorList>
            <person name="Dong C.H."/>
            <person name="Jang M."/>
            <person name="Scharein B."/>
            <person name="Malach A."/>
            <person name="Rivarola M."/>
            <person name="Liesch J."/>
            <person name="Groth G."/>
            <person name="Hwang I."/>
            <person name="Chang C."/>
        </authorList>
    </citation>
    <scope>INTERACTION WITH RTE1</scope>
</reference>
<reference key="17">
    <citation type="journal article" date="2010" name="Mol. Plant">
        <title>New insight in ethylene signaling: autokinase activity of ETR1 modulates the interaction of receptors and EIN2.</title>
        <authorList>
            <person name="Bisson M.M."/>
            <person name="Groth G."/>
        </authorList>
    </citation>
    <scope>FUNCTION</scope>
    <scope>PHOSPHORYLATION AT HIS-353</scope>
    <scope>MUTAGENESIS OF HIS-353</scope>
</reference>
<reference key="18">
    <citation type="journal article" date="1999" name="Structure">
        <title>The structure of the signal receiver domain of the Arabidopsis thaliana ethylene receptor ETR1.</title>
        <authorList>
            <person name="Mueller-Dieckmann H.-J."/>
            <person name="Grantz A.A."/>
            <person name="Kim S.-H."/>
        </authorList>
    </citation>
    <scope>X-RAY CRYSTALLOGRAPHY (2.5 ANGSTROMS) OF 603-738</scope>
</reference>
<reference key="19">
    <citation type="journal article" date="2015" name="J. Biol. Chem.">
        <title>Structural model of the cytosolic domain of the plant ethylene receptor 1 (ETR1).</title>
        <authorList>
            <person name="Mayerhofer H."/>
            <person name="Panneerselvam S."/>
            <person name="Kaljunen H."/>
            <person name="Tuukkanen A."/>
            <person name="Mertens H.D."/>
            <person name="Mueller-Dieckmann J."/>
        </authorList>
    </citation>
    <scope>X-RAY CRYSTALLOGRAPHY (1.90 ANGSTROMS) OF 407-589 IN COMPLEX WITH ADP</scope>
</reference>
<sequence>MEVCNCIEPQWPADELLMKYQYISDFFIAIAYFSIPLELIYFVKKSAVFPYRWVLVQFGAFIVLCGATHLINLWTFTTHSRTVALVMTTAKVLTAVVSCATALMLVHIIPDLLSVKTRELFLKNKAAELDREMGLIRTQEETGRHVRMLTHEIRSTLDRHTILKTTLVELGRTLALEECALWMPTRTGLELQLSYTLRHQHPVEYTVPIQLPVINQVFGTSRAVKISPNSPVARLRPVSGKYMLGEVVAVRVPLLHLSNFQINDWPELSTKRYALMVLMLPSDSARQWHVHELELVEVVADQVAVALSHAAILEESMRARDLLMEQNVALDLARREAETAIRARNDFLAVMNHEMRTPMHAIIALSSLLQETELTPEQRLMVETILKSSNLLATLMNDVLDLSRLEDGSLQLELGTFNLHTLFREVLNLIKPIAVVKKLPITLNLAPDLPEFVVGDEKRLMQIILNIVGNAVKFSKQGSISVTALVTKSDTRAADFFVVPTGSHFYLRVKVKDSGAGINPQDIPKIFTKFAQTQSLATRSSGGSGLGLAISKRFVNLMEGNIWIESDGLGKGCTAIFDVKLGISERSNESKQSGIPKVPAIPRHSNFTGLKVLVMDENGVSRMVTKGLLVHLGCEVTTVSSNEECLRVVSHEHKVVFMDVCMPGVENYQIALRIHEKFTKQRHQRPLLVALSGNTDKSTKEKCMSFGLDGVLLKPVSLDNIRDVLSDLLEPRVLYEGM</sequence>
<evidence type="ECO:0000250" key="1">
    <source>
        <dbReference type="UniProtKB" id="Q0WPQ2"/>
    </source>
</evidence>
<evidence type="ECO:0000255" key="2"/>
<evidence type="ECO:0000255" key="3">
    <source>
        <dbReference type="PROSITE-ProRule" id="PRU00107"/>
    </source>
</evidence>
<evidence type="ECO:0000255" key="4">
    <source>
        <dbReference type="PROSITE-ProRule" id="PRU00169"/>
    </source>
</evidence>
<evidence type="ECO:0000269" key="5">
    <source>
    </source>
</evidence>
<evidence type="ECO:0000269" key="6">
    <source>
    </source>
</evidence>
<evidence type="ECO:0000269" key="7">
    <source>
    </source>
</evidence>
<evidence type="ECO:0000269" key="8">
    <source>
    </source>
</evidence>
<evidence type="ECO:0000269" key="9">
    <source>
    </source>
</evidence>
<evidence type="ECO:0000269" key="10">
    <source>
    </source>
</evidence>
<evidence type="ECO:0000269" key="11">
    <source>
    </source>
</evidence>
<evidence type="ECO:0000269" key="12">
    <source>
    </source>
</evidence>
<evidence type="ECO:0000269" key="13">
    <source>
    </source>
</evidence>
<evidence type="ECO:0000269" key="14">
    <source>
    </source>
</evidence>
<evidence type="ECO:0000269" key="15">
    <source>
    </source>
</evidence>
<evidence type="ECO:0000269" key="16">
    <source>
    </source>
</evidence>
<evidence type="ECO:0000269" key="17">
    <source>
    </source>
</evidence>
<evidence type="ECO:0000303" key="18">
    <source>
    </source>
</evidence>
<evidence type="ECO:0000305" key="19"/>
<evidence type="ECO:0000312" key="20">
    <source>
        <dbReference type="Araport" id="AT1G66340"/>
    </source>
</evidence>
<evidence type="ECO:0000312" key="21">
    <source>
        <dbReference type="EMBL" id="AAG52169.1"/>
    </source>
</evidence>
<evidence type="ECO:0007744" key="22">
    <source>
        <dbReference type="PDB" id="4PL9"/>
    </source>
</evidence>
<evidence type="ECO:0007829" key="23">
    <source>
        <dbReference type="PDB" id="1DCF"/>
    </source>
</evidence>
<evidence type="ECO:0007829" key="24">
    <source>
        <dbReference type="PDB" id="4PL9"/>
    </source>
</evidence>
<protein>
    <recommendedName>
        <fullName evidence="18">Ethylene receptor 1</fullName>
        <shortName evidence="18">AtETR1</shortName>
        <ecNumber evidence="19">2.7.13.3</ecNumber>
    </recommendedName>
    <alternativeName>
        <fullName evidence="18">Protein ETHYLENE RESPONSE 1</fullName>
    </alternativeName>
    <alternativeName>
        <fullName evidence="18">Protein ETR1</fullName>
    </alternativeName>
</protein>
<accession>P49333</accession>
<keyword id="KW-0002">3D-structure</keyword>
<keyword id="KW-0067">ATP-binding</keyword>
<keyword id="KW-0186">Copper</keyword>
<keyword id="KW-1015">Disulfide bond</keyword>
<keyword id="KW-0256">Endoplasmic reticulum</keyword>
<keyword id="KW-0936">Ethylene signaling pathway</keyword>
<keyword id="KW-1017">Isopeptide bond</keyword>
<keyword id="KW-0418">Kinase</keyword>
<keyword id="KW-0472">Membrane</keyword>
<keyword id="KW-0479">Metal-binding</keyword>
<keyword id="KW-0547">Nucleotide-binding</keyword>
<keyword id="KW-0597">Phosphoprotein</keyword>
<keyword id="KW-0675">Receptor</keyword>
<keyword id="KW-1185">Reference proteome</keyword>
<keyword id="KW-0808">Transferase</keyword>
<keyword id="KW-0812">Transmembrane</keyword>
<keyword id="KW-1133">Transmembrane helix</keyword>
<keyword id="KW-0902">Two-component regulatory system</keyword>
<keyword id="KW-0832">Ubl conjugation</keyword>
<gene>
    <name evidence="18" type="primary">ETR1</name>
    <name evidence="20" type="ordered locus">At1g66340</name>
    <name evidence="21" type="ORF">T27F4.9</name>
</gene>
<comment type="function">
    <text evidence="7 8 12">Ethylene receptor related to bacterial two-component regulators. Acts as a redundant negative regulator of ethylene signaling (PubMed:15466228, PubMed:15703053). In the presence of ethylene, the auto-kinase activity of ETR1 is inhibited and the non-phosphorylated kinase domain binds tightly to the corresponding domain of EIN2 (PubMed:20591837).</text>
</comment>
<comment type="catalytic activity">
    <reaction>
        <text>ATP + protein L-histidine = ADP + protein N-phospho-L-histidine.</text>
        <dbReference type="EC" id="2.7.13.3"/>
    </reaction>
</comment>
<comment type="cofactor">
    <cofactor evidence="17">
        <name>Cu cation</name>
        <dbReference type="ChEBI" id="CHEBI:23378"/>
    </cofactor>
    <text evidence="17">Binds 1 copper ion per dimer.</text>
</comment>
<comment type="subunit">
    <text evidence="5 10 11 13 14">Homodimer; disulfide-linked. Heteromer with ERS1, ERS2, ETR2 and EIN4. Interacts with AHP1, AHP2 and AHP3. Interacts with RTE1 (PubMed:10930573, PubMed:18577522, PubMed:20952388, PubMed:7759498). Interacts with EIN2 (PubMed:19769567).</text>
</comment>
<comment type="interaction">
    <interactant intactId="EBI-1606682">
        <id>P49333</id>
    </interactant>
    <interactant intactId="EBI-1100673">
        <id>Q9ZNV9</id>
        <label>AHP1</label>
    </interactant>
    <organismsDiffer>false</organismsDiffer>
    <experiments>3</experiments>
</comment>
<comment type="interaction">
    <interactant intactId="EBI-1606682">
        <id>P49333</id>
    </interactant>
    <interactant intactId="EBI-1606697">
        <id>Q05609</id>
        <label>CTR1</label>
    </interactant>
    <organismsDiffer>false</organismsDiffer>
    <experiments>6</experiments>
</comment>
<comment type="interaction">
    <interactant intactId="EBI-1606682">
        <id>P49333</id>
    </interactant>
    <interactant intactId="EBI-2437287">
        <id>Q9S814</id>
        <label>EIN2</label>
    </interactant>
    <organismsDiffer>false</organismsDiffer>
    <experiments>2</experiments>
</comment>
<comment type="interaction">
    <interactant intactId="EBI-1606682">
        <id>P49333</id>
    </interactant>
    <interactant intactId="EBI-1787556">
        <id>P93825</id>
        <label>ERS2</label>
    </interactant>
    <organismsDiffer>false</organismsDiffer>
    <experiments>2</experiments>
</comment>
<comment type="interaction">
    <interactant intactId="EBI-1606682">
        <id>P49333</id>
    </interactant>
    <interactant intactId="EBI-1606682">
        <id>P49333</id>
        <label>ETR1</label>
    </interactant>
    <organismsDiffer>false</organismsDiffer>
    <experiments>2</experiments>
</comment>
<comment type="interaction">
    <interactant intactId="EBI-1606682">
        <id>P49333</id>
    </interactant>
    <interactant intactId="EBI-1787533">
        <id>Q0WPQ2</id>
        <label>ETR2</label>
    </interactant>
    <organismsDiffer>false</organismsDiffer>
    <experiments>2</experiments>
</comment>
<comment type="interaction">
    <interactant intactId="EBI-1606682">
        <id>P49333</id>
    </interactant>
    <interactant intactId="EBI-2437263">
        <id>F4ITL6</id>
        <label>RTE1</label>
    </interactant>
    <organismsDiffer>false</organismsDiffer>
    <experiments>5</experiments>
</comment>
<comment type="subcellular location">
    <subcellularLocation>
        <location evidence="6 11">Endoplasmic reticulum membrane</location>
        <topology evidence="2">Multi-pass membrane protein</topology>
    </subcellularLocation>
</comment>
<comment type="tissue specificity">
    <text evidence="16">Leaves, roots, stems, seedlings, flowers, anthers, carpels and ovules.</text>
</comment>
<comment type="domain">
    <text>The GAF domain is sufficient to mediate heteromerization.</text>
</comment>
<comment type="PTM">
    <text evidence="12">Autophosphorylated. Phosphorylation at His-353 modulates the interaction with EIN2.</text>
</comment>
<comment type="disruption phenotype">
    <text evidence="9">No visible phenotype in ethylene response; due to redundancy with ERS1. Ers1 and etr1 double mutants display a constitutive ethylene-response phenotype.</text>
</comment>
<comment type="similarity">
    <text evidence="19">Belongs to the ethylene receptor family.</text>
</comment>
<name>ETR1_ARATH</name>
<proteinExistence type="evidence at protein level"/>